<reference key="1">
    <citation type="journal article" date="1997" name="Nature">
        <title>The nucleotide sequence of Saccharomyces cerevisiae chromosome XIII.</title>
        <authorList>
            <person name="Bowman S."/>
            <person name="Churcher C.M."/>
            <person name="Badcock K."/>
            <person name="Brown D."/>
            <person name="Chillingworth T."/>
            <person name="Connor R."/>
            <person name="Dedman K."/>
            <person name="Devlin K."/>
            <person name="Gentles S."/>
            <person name="Hamlin N."/>
            <person name="Hunt S."/>
            <person name="Jagels K."/>
            <person name="Lye G."/>
            <person name="Moule S."/>
            <person name="Odell C."/>
            <person name="Pearson D."/>
            <person name="Rajandream M.A."/>
            <person name="Rice P."/>
            <person name="Skelton J."/>
            <person name="Walsh S.V."/>
            <person name="Whitehead S."/>
            <person name="Barrell B.G."/>
        </authorList>
    </citation>
    <scope>NUCLEOTIDE SEQUENCE [LARGE SCALE GENOMIC DNA]</scope>
    <source>
        <strain>ATCC 204508 / S288c</strain>
    </source>
</reference>
<reference key="2">
    <citation type="journal article" date="2014" name="G3 (Bethesda)">
        <title>The reference genome sequence of Saccharomyces cerevisiae: Then and now.</title>
        <authorList>
            <person name="Engel S.R."/>
            <person name="Dietrich F.S."/>
            <person name="Fisk D.G."/>
            <person name="Binkley G."/>
            <person name="Balakrishnan R."/>
            <person name="Costanzo M.C."/>
            <person name="Dwight S.S."/>
            <person name="Hitz B.C."/>
            <person name="Karra K."/>
            <person name="Nash R.S."/>
            <person name="Weng S."/>
            <person name="Wong E.D."/>
            <person name="Lloyd P."/>
            <person name="Skrzypek M.S."/>
            <person name="Miyasato S.R."/>
            <person name="Simison M."/>
            <person name="Cherry J.M."/>
        </authorList>
    </citation>
    <scope>GENOME REANNOTATION</scope>
    <source>
        <strain>ATCC 204508 / S288c</strain>
    </source>
</reference>
<reference key="3">
    <citation type="journal article" date="2007" name="Genome Res.">
        <title>Approaching a complete repository of sequence-verified protein-encoding clones for Saccharomyces cerevisiae.</title>
        <authorList>
            <person name="Hu Y."/>
            <person name="Rolfs A."/>
            <person name="Bhullar B."/>
            <person name="Murthy T.V.S."/>
            <person name="Zhu C."/>
            <person name="Berger M.F."/>
            <person name="Camargo A.A."/>
            <person name="Kelley F."/>
            <person name="McCarron S."/>
            <person name="Jepson D."/>
            <person name="Richardson A."/>
            <person name="Raphael J."/>
            <person name="Moreira D."/>
            <person name="Taycher E."/>
            <person name="Zuo D."/>
            <person name="Mohr S."/>
            <person name="Kane M.F."/>
            <person name="Williamson J."/>
            <person name="Simpson A.J.G."/>
            <person name="Bulyk M.L."/>
            <person name="Harlow E."/>
            <person name="Marsischky G."/>
            <person name="Kolodner R.D."/>
            <person name="LaBaer J."/>
        </authorList>
    </citation>
    <scope>NUCLEOTIDE SEQUENCE [GENOMIC DNA]</scope>
    <source>
        <strain>ATCC 204508 / S288c</strain>
    </source>
</reference>
<reference key="4">
    <citation type="journal article" date="2003" name="Nature">
        <title>Global analysis of protein expression in yeast.</title>
        <authorList>
            <person name="Ghaemmaghami S."/>
            <person name="Huh W.-K."/>
            <person name="Bower K."/>
            <person name="Howson R.W."/>
            <person name="Belle A."/>
            <person name="Dephoure N."/>
            <person name="O'Shea E.K."/>
            <person name="Weissman J.S."/>
        </authorList>
    </citation>
    <scope>LEVEL OF PROTEIN EXPRESSION [LARGE SCALE ANALYSIS]</scope>
</reference>
<reference key="5">
    <citation type="journal article" date="2005" name="PLoS Genet.">
        <title>Genome-wide requirements for resistance to functionally distinct DNA-damaging agents.</title>
        <authorList>
            <person name="Lee W."/>
            <person name="St Onge R.P."/>
            <person name="Proctor M."/>
            <person name="Flaherty P."/>
            <person name="Jordan M.I."/>
            <person name="Arkin A.P."/>
            <person name="Davis R.W."/>
            <person name="Nislow C."/>
            <person name="Giaever G."/>
        </authorList>
    </citation>
    <scope>FUNCTION</scope>
</reference>
<reference key="6">
    <citation type="journal article" date="2007" name="PLoS Genet.">
        <title>Genome-wide analysis of Rad52 foci reveals diverse mechanisms impacting recombination.</title>
        <authorList>
            <person name="Alvaro D."/>
            <person name="Lisby M."/>
            <person name="Rothstein R."/>
        </authorList>
    </citation>
    <scope>DISRUPTION PHENOTYPE</scope>
</reference>
<dbReference type="EMBL" id="Z48952">
    <property type="protein sequence ID" value="CAA88798.1"/>
    <property type="molecule type" value="Genomic_DNA"/>
</dbReference>
<dbReference type="EMBL" id="AY557971">
    <property type="protein sequence ID" value="AAS56297.1"/>
    <property type="molecule type" value="Genomic_DNA"/>
</dbReference>
<dbReference type="EMBL" id="BK006946">
    <property type="protein sequence ID" value="DAA09971.1"/>
    <property type="molecule type" value="Genomic_DNA"/>
</dbReference>
<dbReference type="PIR" id="S52833">
    <property type="entry name" value="S52833"/>
</dbReference>
<dbReference type="RefSeq" id="NP_013789.1">
    <property type="nucleotide sequence ID" value="NM_001182571.1"/>
</dbReference>
<dbReference type="SMR" id="Q04772"/>
<dbReference type="BioGRID" id="35248">
    <property type="interactions" value="225"/>
</dbReference>
<dbReference type="FunCoup" id="Q04772">
    <property type="interactions" value="134"/>
</dbReference>
<dbReference type="STRING" id="4932.YMR073C"/>
<dbReference type="GlyGen" id="Q04772">
    <property type="glycosylation" value="3 sites, 1 O-linked glycan (3 sites)"/>
</dbReference>
<dbReference type="iPTMnet" id="Q04772"/>
<dbReference type="PaxDb" id="4932-YMR073C"/>
<dbReference type="PeptideAtlas" id="Q04772"/>
<dbReference type="EnsemblFungi" id="YMR073C_mRNA">
    <property type="protein sequence ID" value="YMR073C"/>
    <property type="gene ID" value="YMR073C"/>
</dbReference>
<dbReference type="GeneID" id="855095"/>
<dbReference type="KEGG" id="sce:YMR073C"/>
<dbReference type="AGR" id="SGD:S000004677"/>
<dbReference type="SGD" id="S000004677">
    <property type="gene designation" value="IRC21"/>
</dbReference>
<dbReference type="VEuPathDB" id="FungiDB:YMR073C"/>
<dbReference type="eggNOG" id="KOG0536">
    <property type="taxonomic scope" value="Eukaryota"/>
</dbReference>
<dbReference type="GeneTree" id="ENSGT01100000266816"/>
<dbReference type="HOGENOM" id="CLU_046313_2_0_1"/>
<dbReference type="InParanoid" id="Q04772"/>
<dbReference type="OMA" id="YCITDYL"/>
<dbReference type="OrthoDB" id="432299at2759"/>
<dbReference type="BioCyc" id="YEAST:G3O-32775-MONOMER"/>
<dbReference type="BioGRID-ORCS" id="855095">
    <property type="hits" value="0 hits in 10 CRISPR screens"/>
</dbReference>
<dbReference type="PRO" id="PR:Q04772"/>
<dbReference type="Proteomes" id="UP000002311">
    <property type="component" value="Chromosome XIII"/>
</dbReference>
<dbReference type="RNAct" id="Q04772">
    <property type="molecule type" value="protein"/>
</dbReference>
<dbReference type="GO" id="GO:0005737">
    <property type="term" value="C:cytoplasm"/>
    <property type="evidence" value="ECO:0007005"/>
    <property type="project" value="SGD"/>
</dbReference>
<dbReference type="GO" id="GO:0004128">
    <property type="term" value="F:cytochrome-b5 reductase activity, acting on NAD(P)H"/>
    <property type="evidence" value="ECO:0000318"/>
    <property type="project" value="GO_Central"/>
</dbReference>
<dbReference type="GO" id="GO:0020037">
    <property type="term" value="F:heme binding"/>
    <property type="evidence" value="ECO:0000318"/>
    <property type="project" value="GO_Central"/>
</dbReference>
<dbReference type="GO" id="GO:0046872">
    <property type="term" value="F:metal ion binding"/>
    <property type="evidence" value="ECO:0007669"/>
    <property type="project" value="UniProtKB-KW"/>
</dbReference>
<dbReference type="GO" id="GO:0006974">
    <property type="term" value="P:DNA damage response"/>
    <property type="evidence" value="ECO:0000316"/>
    <property type="project" value="SGD"/>
</dbReference>
<dbReference type="GO" id="GO:0009410">
    <property type="term" value="P:response to xenobiotic stimulus"/>
    <property type="evidence" value="ECO:0007001"/>
    <property type="project" value="SGD"/>
</dbReference>
<dbReference type="Gene3D" id="3.10.120.10">
    <property type="entry name" value="Cytochrome b5-like heme/steroid binding domain"/>
    <property type="match status" value="1"/>
</dbReference>
<dbReference type="InterPro" id="IPR001199">
    <property type="entry name" value="Cyt_B5-like_heme/steroid-bd"/>
</dbReference>
<dbReference type="InterPro" id="IPR036400">
    <property type="entry name" value="Cyt_B5-like_heme/steroid_sf"/>
</dbReference>
<dbReference type="InterPro" id="IPR018506">
    <property type="entry name" value="Cyt_B5_heme-BS"/>
</dbReference>
<dbReference type="InterPro" id="IPR051872">
    <property type="entry name" value="Cytochrome_b5/Flavoprotein_Rdt"/>
</dbReference>
<dbReference type="PANTHER" id="PTHR46237:SF1">
    <property type="entry name" value="CYTOCHROME B5 REDUCTASE 4"/>
    <property type="match status" value="1"/>
</dbReference>
<dbReference type="PANTHER" id="PTHR46237">
    <property type="entry name" value="CYTOCHROME B5 REDUCTASE 4 FAMILY MEMBER"/>
    <property type="match status" value="1"/>
</dbReference>
<dbReference type="Pfam" id="PF00173">
    <property type="entry name" value="Cyt-b5"/>
    <property type="match status" value="1"/>
</dbReference>
<dbReference type="SMART" id="SM01117">
    <property type="entry name" value="Cyt-b5"/>
    <property type="match status" value="1"/>
</dbReference>
<dbReference type="SUPFAM" id="SSF55856">
    <property type="entry name" value="Cytochrome b5-like heme/steroid binding domain"/>
    <property type="match status" value="1"/>
</dbReference>
<dbReference type="PROSITE" id="PS00191">
    <property type="entry name" value="CYTOCHROME_B5_1"/>
    <property type="match status" value="1"/>
</dbReference>
<dbReference type="PROSITE" id="PS50255">
    <property type="entry name" value="CYTOCHROME_B5_2"/>
    <property type="match status" value="1"/>
</dbReference>
<name>IRC21_YEAST</name>
<accession>Q04772</accession>
<accession>D6VZP7</accession>
<feature type="chain" id="PRO_0000166039" description="Increased recombination centers protein 21">
    <location>
        <begin position="1"/>
        <end position="201"/>
    </location>
</feature>
<feature type="domain" description="Cytochrome b5 heme-binding" evidence="1">
    <location>
        <begin position="122"/>
        <end position="200"/>
    </location>
</feature>
<feature type="binding site" description="axial binding residue" evidence="1">
    <location>
        <position position="158"/>
    </location>
    <ligand>
        <name>heme</name>
        <dbReference type="ChEBI" id="CHEBI:30413"/>
    </ligand>
    <ligandPart>
        <name>Fe</name>
        <dbReference type="ChEBI" id="CHEBI:18248"/>
    </ligandPart>
</feature>
<feature type="binding site" description="axial binding residue" evidence="1">
    <location>
        <position position="182"/>
    </location>
    <ligand>
        <name>heme</name>
        <dbReference type="ChEBI" id="CHEBI:30413"/>
    </ligand>
    <ligandPart>
        <name>Fe</name>
        <dbReference type="ChEBI" id="CHEBI:18248"/>
    </ligandPart>
</feature>
<gene>
    <name type="primary">IRC21</name>
    <name type="ordered locus">YMR073C</name>
    <name type="ORF">YM9916.12C</name>
</gene>
<comment type="function">
    <text evidence="3">Involved in resistance to carboplatin and cisplatin. Is probably involved in a pathway contributing to genomic integrity.</text>
</comment>
<comment type="disruption phenotype">
    <text evidence="4">Displays increased levels of spontaneous RAD52 foci in proliferating diploid cells.</text>
</comment>
<comment type="miscellaneous">
    <text evidence="2">Present with 450 molecules/cell in log phase SD medium.</text>
</comment>
<comment type="similarity">
    <text evidence="5">Belongs to the cytochrome b5 family.</text>
</comment>
<proteinExistence type="evidence at protein level"/>
<keyword id="KW-0349">Heme</keyword>
<keyword id="KW-0408">Iron</keyword>
<keyword id="KW-0479">Metal-binding</keyword>
<keyword id="KW-1185">Reference proteome</keyword>
<sequence>MSSDGMNRDVSNSKPNVRFAAPQRLSVAHPAISSPLHMPMSKSSRKPLVRTKIRLDPGHSALDWHSLTSNPANYYTKFVSLQLIQDLLDDPVFQKDNFKFSPSQLKNQLLVQKIPLYKIMPPLRINRKIVKKHCKGEDELWCVINGKVYDISSYLKFHPGGTDILIKHRNSDDLITYFNKYHQWVNYEKLLQVCFIGVVCE</sequence>
<organism>
    <name type="scientific">Saccharomyces cerevisiae (strain ATCC 204508 / S288c)</name>
    <name type="common">Baker's yeast</name>
    <dbReference type="NCBI Taxonomy" id="559292"/>
    <lineage>
        <taxon>Eukaryota</taxon>
        <taxon>Fungi</taxon>
        <taxon>Dikarya</taxon>
        <taxon>Ascomycota</taxon>
        <taxon>Saccharomycotina</taxon>
        <taxon>Saccharomycetes</taxon>
        <taxon>Saccharomycetales</taxon>
        <taxon>Saccharomycetaceae</taxon>
        <taxon>Saccharomyces</taxon>
    </lineage>
</organism>
<protein>
    <recommendedName>
        <fullName>Increased recombination centers protein 21</fullName>
    </recommendedName>
</protein>
<evidence type="ECO:0000255" key="1">
    <source>
        <dbReference type="PROSITE-ProRule" id="PRU00279"/>
    </source>
</evidence>
<evidence type="ECO:0000269" key="2">
    <source>
    </source>
</evidence>
<evidence type="ECO:0000269" key="3">
    <source>
    </source>
</evidence>
<evidence type="ECO:0000269" key="4">
    <source>
    </source>
</evidence>
<evidence type="ECO:0000305" key="5"/>